<keyword id="KW-0025">Alternative splicing</keyword>
<keyword id="KW-0966">Cell projection</keyword>
<keyword id="KW-0963">Cytoplasm</keyword>
<keyword id="KW-0206">Cytoskeleton</keyword>
<keyword id="KW-0349">Heme</keyword>
<keyword id="KW-0408">Iron</keyword>
<keyword id="KW-0479">Metal-binding</keyword>
<keyword id="KW-1185">Reference proteome</keyword>
<protein>
    <recommendedName>
        <fullName>Cytochrome b5 domain-containing protein 1</fullName>
    </recommendedName>
</protein>
<sequence>MPRRGLVAGPDLDNFQRRYFTPSEVAEHNQLEDLWVSYLGFVYNLTPLVEEFKGDLLLKPILEVAGQDISHWFDPQTRDIRKHIDPLTGCMRYRTPRGRFVHIPPPLPRSDWANDFGVPWWKGANYQVGRLSARTRNIRIINTLATQEHTLQVGAQESMWEILHRYLPYNAHAASYTWKYDGKNLNMDQTLEENGIRDEEEEFDYLNMDGKLHTPAILLYFNDDLTEL</sequence>
<accession>Q5NCY3</accession>
<accession>Q5NCY4</accession>
<proteinExistence type="evidence at transcript level"/>
<feature type="chain" id="PRO_0000312316" description="Cytochrome b5 domain-containing protein 1">
    <location>
        <begin position="1"/>
        <end position="228"/>
    </location>
</feature>
<feature type="domain" description="Cytochrome b5 heme-binding" evidence="2">
    <location>
        <begin position="17"/>
        <end position="83"/>
    </location>
</feature>
<feature type="binding site" description="axial binding residue" evidence="2">
    <location>
        <position position="83"/>
    </location>
    <ligand>
        <name>heme</name>
        <dbReference type="ChEBI" id="CHEBI:30413"/>
    </ligand>
    <ligandPart>
        <name>Fe</name>
        <dbReference type="ChEBI" id="CHEBI:18248"/>
    </ligandPart>
</feature>
<feature type="splice variant" id="VSP_029825" description="In isoform 2." evidence="3">
    <original>VGAQESMWEILHRYLPYNAHAAS</original>
    <variation>LHMEIRWEEFEHGSNPGRKRDPG</variation>
    <location>
        <begin position="153"/>
        <end position="175"/>
    </location>
</feature>
<feature type="splice variant" id="VSP_029826" description="In isoform 2." evidence="3">
    <location>
        <begin position="176"/>
        <end position="228"/>
    </location>
</feature>
<name>CB5D1_MOUSE</name>
<gene>
    <name type="primary">Cyb5d1</name>
    <name type="synonym">Gm740</name>
</gene>
<evidence type="ECO:0000250" key="1">
    <source>
        <dbReference type="UniProtKB" id="Q567I9"/>
    </source>
</evidence>
<evidence type="ECO:0000255" key="2">
    <source>
        <dbReference type="PROSITE-ProRule" id="PRU00279"/>
    </source>
</evidence>
<evidence type="ECO:0000305" key="3"/>
<comment type="function">
    <text evidence="1">Radial spoke stalk protein that binds heme under oxidizing conditions. Required for the coordinated beating of multiple cilia maybe by functioning in a redox signaling pathway.</text>
</comment>
<comment type="subcellular location">
    <subcellularLocation>
        <location evidence="1">Cytoplasm</location>
        <location evidence="1">Cytoskeleton</location>
        <location evidence="1">Cilium axoneme</location>
    </subcellularLocation>
    <text evidence="1">Localizes to the radial spoke stalk.</text>
</comment>
<comment type="alternative products">
    <event type="alternative splicing"/>
    <isoform>
        <id>Q5NCY3-1</id>
        <name>1</name>
        <sequence type="displayed"/>
    </isoform>
    <isoform>
        <id>Q5NCY3-2</id>
        <name>2</name>
        <sequence type="described" ref="VSP_029825 VSP_029826"/>
    </isoform>
</comment>
<comment type="similarity">
    <text evidence="3">Belongs to the cytochrome b5 family.</text>
</comment>
<reference key="1">
    <citation type="journal article" date="2009" name="PLoS Biol.">
        <title>Lineage-specific biology revealed by a finished genome assembly of the mouse.</title>
        <authorList>
            <person name="Church D.M."/>
            <person name="Goodstadt L."/>
            <person name="Hillier L.W."/>
            <person name="Zody M.C."/>
            <person name="Goldstein S."/>
            <person name="She X."/>
            <person name="Bult C.J."/>
            <person name="Agarwala R."/>
            <person name="Cherry J.L."/>
            <person name="DiCuccio M."/>
            <person name="Hlavina W."/>
            <person name="Kapustin Y."/>
            <person name="Meric P."/>
            <person name="Maglott D."/>
            <person name="Birtle Z."/>
            <person name="Marques A.C."/>
            <person name="Graves T."/>
            <person name="Zhou S."/>
            <person name="Teague B."/>
            <person name="Potamousis K."/>
            <person name="Churas C."/>
            <person name="Place M."/>
            <person name="Herschleb J."/>
            <person name="Runnheim R."/>
            <person name="Forrest D."/>
            <person name="Amos-Landgraf J."/>
            <person name="Schwartz D.C."/>
            <person name="Cheng Z."/>
            <person name="Lindblad-Toh K."/>
            <person name="Eichler E.E."/>
            <person name="Ponting C.P."/>
        </authorList>
    </citation>
    <scope>NUCLEOTIDE SEQUENCE [LARGE SCALE GENOMIC DNA]</scope>
    <source>
        <strain>C57BL/6J</strain>
    </source>
</reference>
<reference key="2">
    <citation type="journal article" date="2004" name="Genome Res.">
        <title>The status, quality, and expansion of the NIH full-length cDNA project: the Mammalian Gene Collection (MGC).</title>
        <authorList>
            <consortium name="The MGC Project Team"/>
        </authorList>
    </citation>
    <scope>NUCLEOTIDE SEQUENCE [LARGE SCALE MRNA] (ISOFORM 1)</scope>
    <source>
        <tissue>Testis</tissue>
    </source>
</reference>
<organism>
    <name type="scientific">Mus musculus</name>
    <name type="common">Mouse</name>
    <dbReference type="NCBI Taxonomy" id="10090"/>
    <lineage>
        <taxon>Eukaryota</taxon>
        <taxon>Metazoa</taxon>
        <taxon>Chordata</taxon>
        <taxon>Craniata</taxon>
        <taxon>Vertebrata</taxon>
        <taxon>Euteleostomi</taxon>
        <taxon>Mammalia</taxon>
        <taxon>Eutheria</taxon>
        <taxon>Euarchontoglires</taxon>
        <taxon>Glires</taxon>
        <taxon>Rodentia</taxon>
        <taxon>Myomorpha</taxon>
        <taxon>Muroidea</taxon>
        <taxon>Muridae</taxon>
        <taxon>Murinae</taxon>
        <taxon>Mus</taxon>
        <taxon>Mus</taxon>
    </lineage>
</organism>
<dbReference type="EMBL" id="AL596125">
    <property type="status" value="NOT_ANNOTATED_CDS"/>
    <property type="molecule type" value="Genomic_DNA"/>
</dbReference>
<dbReference type="EMBL" id="BC099556">
    <property type="protein sequence ID" value="AAH99556.1"/>
    <property type="molecule type" value="mRNA"/>
</dbReference>
<dbReference type="CCDS" id="CCDS24892.1">
    <molecule id="Q5NCY3-1"/>
</dbReference>
<dbReference type="RefSeq" id="NP_001038990.1">
    <molecule id="Q5NCY3-1"/>
    <property type="nucleotide sequence ID" value="NM_001045525.2"/>
</dbReference>
<dbReference type="RefSeq" id="XP_011247375.1">
    <molecule id="Q5NCY3-1"/>
    <property type="nucleotide sequence ID" value="XM_011249073.4"/>
</dbReference>
<dbReference type="SMR" id="Q5NCY3"/>
<dbReference type="ComplexPortal" id="CPX-8161">
    <property type="entry name" value="Radial spoke complex, ciliiar variant"/>
</dbReference>
<dbReference type="ComplexPortal" id="CPX-8162">
    <property type="entry name" value="Radial spoke complex, flagellar variant"/>
</dbReference>
<dbReference type="FunCoup" id="Q5NCY3">
    <property type="interactions" value="3"/>
</dbReference>
<dbReference type="STRING" id="10090.ENSMUSP00000059709"/>
<dbReference type="iPTMnet" id="Q5NCY3"/>
<dbReference type="PhosphoSitePlus" id="Q5NCY3"/>
<dbReference type="PaxDb" id="10090-ENSMUSP00000059709"/>
<dbReference type="ProteomicsDB" id="279928">
    <molecule id="Q5NCY3-1"/>
</dbReference>
<dbReference type="ProteomicsDB" id="279929">
    <molecule id="Q5NCY3-2"/>
</dbReference>
<dbReference type="Antibodypedia" id="12269">
    <property type="antibodies" value="84 antibodies from 15 providers"/>
</dbReference>
<dbReference type="Ensembl" id="ENSMUST00000051620.5">
    <molecule id="Q5NCY3-1"/>
    <property type="protein sequence ID" value="ENSMUSP00000059709.5"/>
    <property type="gene ID" value="ENSMUSG00000044795.13"/>
</dbReference>
<dbReference type="Ensembl" id="ENSMUST00000108660.8">
    <molecule id="Q5NCY3-2"/>
    <property type="protein sequence ID" value="ENSMUSP00000104300.2"/>
    <property type="gene ID" value="ENSMUSG00000044795.13"/>
</dbReference>
<dbReference type="GeneID" id="327951"/>
<dbReference type="KEGG" id="mmu:327951"/>
<dbReference type="UCSC" id="uc007jpz.1">
    <molecule id="Q5NCY3-1"/>
    <property type="organism name" value="mouse"/>
</dbReference>
<dbReference type="AGR" id="MGI:2685586"/>
<dbReference type="CTD" id="124637"/>
<dbReference type="MGI" id="MGI:2685586">
    <property type="gene designation" value="Cyb5d1"/>
</dbReference>
<dbReference type="VEuPathDB" id="HostDB:ENSMUSG00000044795"/>
<dbReference type="eggNOG" id="KOG0537">
    <property type="taxonomic scope" value="Eukaryota"/>
</dbReference>
<dbReference type="GeneTree" id="ENSGT00440000037582"/>
<dbReference type="HOGENOM" id="CLU_131019_0_0_1"/>
<dbReference type="InParanoid" id="Q5NCY3"/>
<dbReference type="OMA" id="DLTHFFH"/>
<dbReference type="OrthoDB" id="31587at9989"/>
<dbReference type="PhylomeDB" id="Q5NCY3"/>
<dbReference type="TreeFam" id="TF324861"/>
<dbReference type="BioGRID-ORCS" id="327951">
    <property type="hits" value="3 hits in 78 CRISPR screens"/>
</dbReference>
<dbReference type="PRO" id="PR:Q5NCY3"/>
<dbReference type="Proteomes" id="UP000000589">
    <property type="component" value="Chromosome 11"/>
</dbReference>
<dbReference type="RNAct" id="Q5NCY3">
    <property type="molecule type" value="protein"/>
</dbReference>
<dbReference type="Bgee" id="ENSMUSG00000044795">
    <property type="expression patterns" value="Expressed in ear vesicle and 238 other cell types or tissues"/>
</dbReference>
<dbReference type="GO" id="GO:0042995">
    <property type="term" value="C:cell projection"/>
    <property type="evidence" value="ECO:0007669"/>
    <property type="project" value="UniProtKB-KW"/>
</dbReference>
<dbReference type="GO" id="GO:0005737">
    <property type="term" value="C:cytoplasm"/>
    <property type="evidence" value="ECO:0007669"/>
    <property type="project" value="UniProtKB-KW"/>
</dbReference>
<dbReference type="GO" id="GO:0005856">
    <property type="term" value="C:cytoskeleton"/>
    <property type="evidence" value="ECO:0007669"/>
    <property type="project" value="UniProtKB-KW"/>
</dbReference>
<dbReference type="GO" id="GO:0046872">
    <property type="term" value="F:metal ion binding"/>
    <property type="evidence" value="ECO:0007669"/>
    <property type="project" value="UniProtKB-KW"/>
</dbReference>
<dbReference type="GO" id="GO:0003356">
    <property type="term" value="P:regulation of cilium beat frequency"/>
    <property type="evidence" value="ECO:0000250"/>
    <property type="project" value="UniProtKB"/>
</dbReference>
<dbReference type="Gene3D" id="3.10.120.10">
    <property type="entry name" value="Cytochrome b5-like heme/steroid binding domain"/>
    <property type="match status" value="1"/>
</dbReference>
<dbReference type="InterPro" id="IPR001199">
    <property type="entry name" value="Cyt_B5-like_heme/steroid-bd"/>
</dbReference>
<dbReference type="InterPro" id="IPR036400">
    <property type="entry name" value="Cyt_B5-like_heme/steroid_sf"/>
</dbReference>
<dbReference type="InterPro" id="IPR052320">
    <property type="entry name" value="Cytochrome_b5_domain"/>
</dbReference>
<dbReference type="PANTHER" id="PTHR21281">
    <property type="entry name" value="CYTOCHROME B5 DOMAIN-CONTAINING PROTEIN 1"/>
    <property type="match status" value="1"/>
</dbReference>
<dbReference type="PANTHER" id="PTHR21281:SF0">
    <property type="entry name" value="CYTOCHROME B5 DOMAIN-CONTAINING PROTEIN 1"/>
    <property type="match status" value="1"/>
</dbReference>
<dbReference type="Pfam" id="PF00173">
    <property type="entry name" value="Cyt-b5"/>
    <property type="match status" value="1"/>
</dbReference>
<dbReference type="SMART" id="SM01117">
    <property type="entry name" value="Cyt-b5"/>
    <property type="match status" value="1"/>
</dbReference>
<dbReference type="SUPFAM" id="SSF55856">
    <property type="entry name" value="Cytochrome b5-like heme/steroid binding domain"/>
    <property type="match status" value="1"/>
</dbReference>
<dbReference type="PROSITE" id="PS50255">
    <property type="entry name" value="CYTOCHROME_B5_2"/>
    <property type="match status" value="1"/>
</dbReference>